<protein>
    <recommendedName>
        <fullName evidence="5">Complement inhibitor RaCI5</fullName>
    </recommendedName>
    <alternativeName>
        <fullName evidence="8">Rhipicephalus appendiculatus complement inhibitor 5</fullName>
    </alternativeName>
</protein>
<feature type="signal peptide" evidence="3">
    <location>
        <begin position="1"/>
        <end position="21"/>
    </location>
</feature>
<feature type="chain" id="PRO_5007492723" description="Complement inhibitor RaCI5">
    <location>
        <begin position="22"/>
        <end position="95"/>
    </location>
</feature>
<feature type="disulfide bond" evidence="2">
    <location>
        <begin position="35"/>
        <end position="59"/>
    </location>
</feature>
<feature type="disulfide bond" evidence="2">
    <location>
        <begin position="40"/>
        <end position="61"/>
    </location>
</feature>
<feature type="disulfide bond" evidence="2">
    <location>
        <begin position="55"/>
        <end position="76"/>
    </location>
</feature>
<accession>A0A141SFN5</accession>
<reference evidence="8" key="1">
    <citation type="journal article" date="2016" name="Nat. Struct. Mol. Biol.">
        <title>Structural basis for therapeutic inhibition of complement C5.</title>
        <authorList>
            <person name="Jore M.M."/>
            <person name="Johnson S."/>
            <person name="Sheppard D."/>
            <person name="Barber N.M."/>
            <person name="Li Y.I."/>
            <person name="Nunn M.A."/>
            <person name="Elmlund H."/>
            <person name="Lea S.M."/>
        </authorList>
    </citation>
    <scope>NUCLEOTIDE SEQUENCE [MRNA]</scope>
    <scope>FUNCTION</scope>
    <source>
        <tissue>Salivary gland</tissue>
    </source>
</reference>
<organism>
    <name type="scientific">Rhipicephalus appendiculatus</name>
    <name type="common">Brown ear tick</name>
    <dbReference type="NCBI Taxonomy" id="34631"/>
    <lineage>
        <taxon>Eukaryota</taxon>
        <taxon>Metazoa</taxon>
        <taxon>Ecdysozoa</taxon>
        <taxon>Arthropoda</taxon>
        <taxon>Chelicerata</taxon>
        <taxon>Arachnida</taxon>
        <taxon>Acari</taxon>
        <taxon>Parasitiformes</taxon>
        <taxon>Ixodida</taxon>
        <taxon>Ixodoidea</taxon>
        <taxon>Ixodidae</taxon>
        <taxon>Rhipicephalinae</taxon>
        <taxon>Rhipicephalus</taxon>
        <taxon>Rhipicephalus</taxon>
    </lineage>
</organism>
<proteinExistence type="inferred from homology"/>
<comment type="function">
    <text evidence="1 2 4">Complement inhibitor (PubMed:27018802). Prevents complement-mediated C5 activation by binding to C5 (By similarity). Binds C5 at a different binding site than the other tick complement inhibitors OmCI and CirpT1, and the drug eculizumab (By similarity).</text>
</comment>
<comment type="subcellular location">
    <subcellularLocation>
        <location evidence="7">Secreted</location>
    </subcellularLocation>
</comment>
<comment type="tissue specificity">
    <text evidence="7">Expressed in salivary glands.</text>
</comment>
<comment type="similarity">
    <text evidence="6">Belongs to the RaCI family.</text>
</comment>
<evidence type="ECO:0000250" key="1">
    <source>
        <dbReference type="UniProtKB" id="A0A146B485"/>
    </source>
</evidence>
<evidence type="ECO:0000250" key="2">
    <source>
        <dbReference type="UniProtKB" id="A0A182DWE4"/>
    </source>
</evidence>
<evidence type="ECO:0000255" key="3"/>
<evidence type="ECO:0000269" key="4">
    <source>
    </source>
</evidence>
<evidence type="ECO:0000303" key="5">
    <source>
    </source>
</evidence>
<evidence type="ECO:0000305" key="6"/>
<evidence type="ECO:0000305" key="7">
    <source>
    </source>
</evidence>
<evidence type="ECO:0000312" key="8">
    <source>
        <dbReference type="EMBL" id="AML25524.1"/>
    </source>
</evidence>
<keyword id="KW-1216">Complement system impairing toxin</keyword>
<keyword id="KW-1015">Disulfide bond</keyword>
<keyword id="KW-0964">Secreted</keyword>
<keyword id="KW-0732">Signal</keyword>
<keyword id="KW-0800">Toxin</keyword>
<name>C5I5_RHIAP</name>
<sequence>MNAVIVLCVTISAVLIHQCYSTAEATLSINGGDMCIEKTCNRSIDAAGKKVIAGCPGGCLCVFNVSDVTYPANGTCYQLATTTTNRPGAVMERER</sequence>
<dbReference type="EMBL" id="KU533795">
    <property type="protein sequence ID" value="AML25524.1"/>
    <property type="molecule type" value="mRNA"/>
</dbReference>
<dbReference type="SMR" id="A0A141SFN5"/>
<dbReference type="GO" id="GO:0005576">
    <property type="term" value="C:extracellular region"/>
    <property type="evidence" value="ECO:0007669"/>
    <property type="project" value="UniProtKB-SubCell"/>
</dbReference>
<dbReference type="GO" id="GO:0090729">
    <property type="term" value="F:toxin activity"/>
    <property type="evidence" value="ECO:0007669"/>
    <property type="project" value="UniProtKB-KW"/>
</dbReference>